<accession>P29937</accession>
<proteinExistence type="inferred from homology"/>
<protein>
    <recommendedName>
        <fullName>Zinc chaperone CobW</fullName>
        <ecNumber evidence="1">3.6.5.-</ecNumber>
    </recommendedName>
</protein>
<dbReference type="EC" id="3.6.5.-" evidence="1"/>
<dbReference type="EMBL" id="M62866">
    <property type="protein sequence ID" value="AAA25779.1"/>
    <property type="molecule type" value="Genomic_DNA"/>
</dbReference>
<dbReference type="SMR" id="P29937"/>
<dbReference type="KEGG" id="ag:AAA25779"/>
<dbReference type="GO" id="GO:0005737">
    <property type="term" value="C:cytoplasm"/>
    <property type="evidence" value="ECO:0007669"/>
    <property type="project" value="TreeGrafter"/>
</dbReference>
<dbReference type="GO" id="GO:0005524">
    <property type="term" value="F:ATP binding"/>
    <property type="evidence" value="ECO:0007669"/>
    <property type="project" value="UniProtKB-KW"/>
</dbReference>
<dbReference type="GO" id="GO:0016787">
    <property type="term" value="F:hydrolase activity"/>
    <property type="evidence" value="ECO:0007669"/>
    <property type="project" value="UniProtKB-KW"/>
</dbReference>
<dbReference type="GO" id="GO:0009236">
    <property type="term" value="P:cobalamin biosynthetic process"/>
    <property type="evidence" value="ECO:0007669"/>
    <property type="project" value="InterPro"/>
</dbReference>
<dbReference type="CDD" id="cd03112">
    <property type="entry name" value="CobW-like"/>
    <property type="match status" value="1"/>
</dbReference>
<dbReference type="Gene3D" id="3.30.1220.10">
    <property type="entry name" value="CobW-like, C-terminal domain"/>
    <property type="match status" value="1"/>
</dbReference>
<dbReference type="Gene3D" id="3.40.50.300">
    <property type="entry name" value="P-loop containing nucleotide triphosphate hydrolases"/>
    <property type="match status" value="1"/>
</dbReference>
<dbReference type="InterPro" id="IPR012824">
    <property type="entry name" value="CobW"/>
</dbReference>
<dbReference type="InterPro" id="IPR036627">
    <property type="entry name" value="CobW-likC_sf"/>
</dbReference>
<dbReference type="InterPro" id="IPR011629">
    <property type="entry name" value="CobW-like_C"/>
</dbReference>
<dbReference type="InterPro" id="IPR003495">
    <property type="entry name" value="CobW/HypB/UreG_nucleotide-bd"/>
</dbReference>
<dbReference type="InterPro" id="IPR027417">
    <property type="entry name" value="P-loop_NTPase"/>
</dbReference>
<dbReference type="InterPro" id="IPR051316">
    <property type="entry name" value="Zinc-reg_GTPase_activator"/>
</dbReference>
<dbReference type="NCBIfam" id="TIGR02475">
    <property type="entry name" value="CobW"/>
    <property type="match status" value="1"/>
</dbReference>
<dbReference type="PANTHER" id="PTHR13748:SF62">
    <property type="entry name" value="COBW DOMAIN-CONTAINING PROTEIN"/>
    <property type="match status" value="1"/>
</dbReference>
<dbReference type="PANTHER" id="PTHR13748">
    <property type="entry name" value="COBW-RELATED"/>
    <property type="match status" value="1"/>
</dbReference>
<dbReference type="Pfam" id="PF02492">
    <property type="entry name" value="cobW"/>
    <property type="match status" value="1"/>
</dbReference>
<dbReference type="Pfam" id="PF07683">
    <property type="entry name" value="CobW_C"/>
    <property type="match status" value="1"/>
</dbReference>
<dbReference type="SMART" id="SM00833">
    <property type="entry name" value="CobW_C"/>
    <property type="match status" value="1"/>
</dbReference>
<dbReference type="SUPFAM" id="SSF90002">
    <property type="entry name" value="Hypothetical protein YjiA, C-terminal domain"/>
    <property type="match status" value="1"/>
</dbReference>
<dbReference type="SUPFAM" id="SSF52540">
    <property type="entry name" value="P-loop containing nucleoside triphosphate hydrolases"/>
    <property type="match status" value="1"/>
</dbReference>
<keyword id="KW-0067">ATP-binding</keyword>
<keyword id="KW-0143">Chaperone</keyword>
<keyword id="KW-0378">Hydrolase</keyword>
<keyword id="KW-0547">Nucleotide-binding</keyword>
<organism>
    <name type="scientific">Sinorhizobium sp</name>
    <dbReference type="NCBI Taxonomy" id="42445"/>
    <lineage>
        <taxon>Bacteria</taxon>
        <taxon>Pseudomonadati</taxon>
        <taxon>Pseudomonadota</taxon>
        <taxon>Alphaproteobacteria</taxon>
        <taxon>Hyphomicrobiales</taxon>
        <taxon>Rhizobiaceae</taxon>
        <taxon>Sinorhizobium/Ensifer group</taxon>
        <taxon>Sinorhizobium</taxon>
    </lineage>
</organism>
<gene>
    <name type="primary">cobW</name>
</gene>
<name>COBW_SINSX</name>
<evidence type="ECO:0000250" key="1">
    <source>
        <dbReference type="UniProtKB" id="P24203"/>
    </source>
</evidence>
<evidence type="ECO:0000250" key="2">
    <source>
        <dbReference type="UniProtKB" id="Q8VEH6"/>
    </source>
</evidence>
<evidence type="ECO:0000255" key="3"/>
<evidence type="ECO:0000305" key="4"/>
<comment type="function">
    <text evidence="2">Zinc chaperone that directly transfers zinc cofactor to target proteins, thereby activating them. Zinc is transferred from the CXCC motif in the GTPase domain to the zinc binding site in target proteins in a process requiring GTP hydrolysis.</text>
</comment>
<comment type="catalytic activity">
    <reaction evidence="1">
        <text>GTP + H2O = GDP + phosphate + H(+)</text>
        <dbReference type="Rhea" id="RHEA:19669"/>
        <dbReference type="ChEBI" id="CHEBI:15377"/>
        <dbReference type="ChEBI" id="CHEBI:15378"/>
        <dbReference type="ChEBI" id="CHEBI:37565"/>
        <dbReference type="ChEBI" id="CHEBI:43474"/>
        <dbReference type="ChEBI" id="CHEBI:58189"/>
    </reaction>
    <physiologicalReaction direction="left-to-right" evidence="1">
        <dbReference type="Rhea" id="RHEA:19670"/>
    </physiologicalReaction>
</comment>
<comment type="similarity">
    <text evidence="4">Belongs to the SIMIBI class G3E GTPase family. ZNG1 subfamily.</text>
</comment>
<comment type="caution">
    <text evidence="4">Was orginally thought to originate from Pseudomonas denitrificans, but similarity searches show that the sequence is much closer to Sinorhizobium. The entry's taxonomy has been changed.</text>
</comment>
<feature type="chain" id="PRO_0000089999" description="Zinc chaperone CobW">
    <location>
        <begin position="1"/>
        <end position="354"/>
    </location>
</feature>
<feature type="domain" description="CobW C-terminal">
    <location>
        <begin position="261"/>
        <end position="354"/>
    </location>
</feature>
<feature type="short sequence motif" description="CXCC motif" evidence="3">
    <location>
        <begin position="77"/>
        <end position="80"/>
    </location>
</feature>
<feature type="binding site" evidence="3">
    <location>
        <begin position="18"/>
        <end position="25"/>
    </location>
    <ligand>
        <name>GTP</name>
        <dbReference type="ChEBI" id="CHEBI:37565"/>
    </ligand>
</feature>
<feature type="binding site" evidence="3">
    <location>
        <begin position="80"/>
        <end position="84"/>
    </location>
    <ligand>
        <name>GTP</name>
        <dbReference type="ChEBI" id="CHEBI:37565"/>
    </ligand>
</feature>
<feature type="binding site" evidence="3">
    <location>
        <begin position="188"/>
        <end position="191"/>
    </location>
    <ligand>
        <name>GTP</name>
        <dbReference type="ChEBI" id="CHEBI:37565"/>
    </ligand>
</feature>
<reference key="1">
    <citation type="journal article" date="1991" name="J. Bacteriol.">
        <title>Nucleotide sequence and genetic analysis of a 13.1-kilobase-pair Pseudomonas denitrificans DNA fragment containing five cob genes and identification of structural genes encoding Cob(I)alamin adenosyltransferase, cobyric acid synthase, and bifunctional cobinamide kinase-cobinamide phosphate guanylyltransferase.</title>
        <authorList>
            <person name="Crouzet J."/>
            <person name="Levy-Schil S."/>
            <person name="Cameron B."/>
            <person name="Cauchois L."/>
            <person name="Rigault S."/>
            <person name="Rouyez M.-C."/>
            <person name="Blanche F."/>
            <person name="Debussche L."/>
            <person name="Thibaut D."/>
        </authorList>
    </citation>
    <scope>NUCLEOTIDE SEQUENCE [GENOMIC DNA]</scope>
    <source>
        <strain>SC510</strain>
    </source>
</reference>
<sequence>MTTARANQGKIPATVITGFLGAGKTTMIRNLLQNADGKRIGLIINEFGDLGVDGDVLKGCGAEACTEDDIIELTNGCICCTVADDFIPTMTKLLERENRPDHIIIETSGLALPQPLIAAFNWPDIRSEVTVDGVVTVVDSAAVAAGRFADDHDKVDALRVEDDNLDHESPIEELFEDQLTAADLIVLNKTDLIDASGLKAVRDEVSSRTSRKPTMIEAKNGEVAAAILLGLGVGTESDIANRKSHHEMEHEAGEEHDHDEFDSFVVELGSIADPAAFIDRLKGVIAEHDVLRLKGFADVPGKPMRLLIQAVGARIDQYYDRAWGAGEKRGTRLVVIGLHDMDEAAVRAAITALV</sequence>